<keyword id="KW-0007">Acetylation</keyword>
<keyword id="KW-0066">ATP synthesis</keyword>
<keyword id="KW-0138">CF(0)</keyword>
<keyword id="KW-0375">Hydrogen ion transport</keyword>
<keyword id="KW-0406">Ion transport</keyword>
<keyword id="KW-0472">Membrane</keyword>
<keyword id="KW-0496">Mitochondrion</keyword>
<keyword id="KW-1185">Reference proteome</keyword>
<keyword id="KW-0812">Transmembrane</keyword>
<keyword id="KW-1133">Transmembrane helix</keyword>
<keyword id="KW-0813">Transport</keyword>
<organism>
    <name type="scientific">Cavia porcellus</name>
    <name type="common">Guinea pig</name>
    <dbReference type="NCBI Taxonomy" id="10141"/>
    <lineage>
        <taxon>Eukaryota</taxon>
        <taxon>Metazoa</taxon>
        <taxon>Chordata</taxon>
        <taxon>Craniata</taxon>
        <taxon>Vertebrata</taxon>
        <taxon>Euteleostomi</taxon>
        <taxon>Mammalia</taxon>
        <taxon>Eutheria</taxon>
        <taxon>Euarchontoglires</taxon>
        <taxon>Glires</taxon>
        <taxon>Rodentia</taxon>
        <taxon>Hystricomorpha</taxon>
        <taxon>Caviidae</taxon>
        <taxon>Cavia</taxon>
    </lineage>
</organism>
<dbReference type="EMBL" id="AJ222767">
    <property type="protein sequence ID" value="CAB51822.1"/>
    <property type="molecule type" value="Genomic_DNA"/>
</dbReference>
<dbReference type="RefSeq" id="NP_008755.1">
    <property type="nucleotide sequence ID" value="NC_000884.1"/>
</dbReference>
<dbReference type="SMR" id="Q9TEG7"/>
<dbReference type="FunCoup" id="Q9TEG7">
    <property type="interactions" value="160"/>
</dbReference>
<dbReference type="STRING" id="10141.ENSCPOP00000014212"/>
<dbReference type="Ensembl" id="ENSCPOT00000017573.1">
    <property type="protein sequence ID" value="ENSCPOP00000014212.1"/>
    <property type="gene ID" value="ENSCPOG00000017418.2"/>
</dbReference>
<dbReference type="GeneID" id="808629"/>
<dbReference type="KEGG" id="cpoc:808629"/>
<dbReference type="CTD" id="4509"/>
<dbReference type="VEuPathDB" id="HostDB:ENSCPOG00000017418"/>
<dbReference type="eggNOG" id="ENOG502T21P">
    <property type="taxonomic scope" value="Eukaryota"/>
</dbReference>
<dbReference type="GeneTree" id="ENSGT00390000008771"/>
<dbReference type="HOGENOM" id="CLU_2811757_0_0_1"/>
<dbReference type="InParanoid" id="Q9TEG7"/>
<dbReference type="OMA" id="LDTSTWF"/>
<dbReference type="OrthoDB" id="9835073at2759"/>
<dbReference type="TreeFam" id="TF343854"/>
<dbReference type="Proteomes" id="UP000005447">
    <property type="component" value="Mitochondrion"/>
</dbReference>
<dbReference type="Bgee" id="ENSCPOG00000017418">
    <property type="expression patterns" value="Expressed in cerebellum and 13 other cell types or tissues"/>
</dbReference>
<dbReference type="GO" id="GO:0031966">
    <property type="term" value="C:mitochondrial membrane"/>
    <property type="evidence" value="ECO:0007669"/>
    <property type="project" value="UniProtKB-SubCell"/>
</dbReference>
<dbReference type="GO" id="GO:0045259">
    <property type="term" value="C:proton-transporting ATP synthase complex"/>
    <property type="evidence" value="ECO:0000250"/>
    <property type="project" value="UniProtKB"/>
</dbReference>
<dbReference type="GO" id="GO:0015078">
    <property type="term" value="F:proton transmembrane transporter activity"/>
    <property type="evidence" value="ECO:0007669"/>
    <property type="project" value="InterPro"/>
</dbReference>
<dbReference type="GO" id="GO:0015986">
    <property type="term" value="P:proton motive force-driven ATP synthesis"/>
    <property type="evidence" value="ECO:0007669"/>
    <property type="project" value="InterPro"/>
</dbReference>
<dbReference type="InterPro" id="IPR039017">
    <property type="entry name" value="ATP8_mammal"/>
</dbReference>
<dbReference type="InterPro" id="IPR001421">
    <property type="entry name" value="ATP8_metazoa"/>
</dbReference>
<dbReference type="PANTHER" id="PTHR13722">
    <property type="entry name" value="ATP SYNTHASE PROTEIN 8"/>
    <property type="match status" value="1"/>
</dbReference>
<dbReference type="PANTHER" id="PTHR13722:SF0">
    <property type="entry name" value="ATP SYNTHASE PROTEIN 8"/>
    <property type="match status" value="1"/>
</dbReference>
<dbReference type="Pfam" id="PF00895">
    <property type="entry name" value="ATP-synt_8"/>
    <property type="match status" value="1"/>
</dbReference>
<gene>
    <name evidence="1" type="primary">MT-ATP8</name>
    <name type="synonym">ATP8</name>
    <name type="synonym">ATPASE8</name>
    <name type="synonym">MTATP8</name>
</gene>
<feature type="chain" id="PRO_0000195503" description="ATP synthase F(0) complex subunit 8">
    <location>
        <begin position="1"/>
        <end position="67"/>
    </location>
</feature>
<feature type="transmembrane region" description="Helical" evidence="4">
    <location>
        <begin position="8"/>
        <end position="24"/>
    </location>
</feature>
<feature type="modified residue" description="N6-acetyllysine; alternate" evidence="2">
    <location>
        <position position="54"/>
    </location>
</feature>
<feature type="modified residue" description="N6-succinyllysine; alternate" evidence="2">
    <location>
        <position position="54"/>
    </location>
</feature>
<feature type="modified residue" description="N6-acetyllysine" evidence="2">
    <location>
        <position position="57"/>
    </location>
</feature>
<geneLocation type="mitochondrion"/>
<protein>
    <recommendedName>
        <fullName evidence="1">ATP synthase F(0) complex subunit 8</fullName>
    </recommendedName>
    <alternativeName>
        <fullName>A6L</fullName>
    </alternativeName>
    <alternativeName>
        <fullName>F-ATPase subunit 8</fullName>
    </alternativeName>
</protein>
<sequence length="67" mass="7947">MPQLDTSTWFTVILSMIISLFMLLQLKISSHSFYLDPKTMSLKTTKHNLPWENKWTKTYLPLSLHLH</sequence>
<accession>Q9TEG7</accession>
<proteinExistence type="inferred from homology"/>
<reference key="1">
    <citation type="journal article" date="1996" name="Nature">
        <title>The guinea-pig is not a rodent.</title>
        <authorList>
            <person name="D'Erchia A.M."/>
            <person name="Gissi C."/>
            <person name="Pesole G."/>
            <person name="Saccone C."/>
            <person name="Arnason U."/>
        </authorList>
    </citation>
    <scope>NUCLEOTIDE SEQUENCE [LARGE SCALE GENOMIC DNA]</scope>
    <source>
        <strain evidence="6">2N</strain>
    </source>
</reference>
<comment type="function">
    <text evidence="1 3">Subunit 8, of the mitochondrial membrane ATP synthase complex (F(1)F(0) ATP synthase or Complex V) that produces ATP from ADP in the presence of a proton gradient across the membrane which is generated by electron transport complexes of the respiratory chain. ATP synthase complex consist of a soluble F(1) head domain - the catalytic core - and a membrane F(1) domain - the membrane proton channel. These two domains are linked by a central stalk rotating inside the F(1) region and a stationary peripheral stalk. During catalysis, ATP synthesis in the catalytic domain of F(1) is coupled via a rotary mechanism of the central stalk subunits to proton translocation (By similarity). In vivo, can only synthesize ATP although its ATP hydrolase activity can be activated artificially in vitro (By similarity). Part of the complex F(0) domain (By similarity).</text>
</comment>
<comment type="subunit">
    <text evidence="1">Component of the ATP synthase complex composed at least of ATP5F1A/subunit alpha, ATP5F1B/subunit beta, ATP5MC1/subunit c (homooctomer), MT-ATP6/subunit a, MT-ATP8/subunit 8, ATP5ME/subunit e, ATP5MF/subunit f, ATP5MG/subunit g, ATP5MK/subunit k, ATP5MJ/subunit j, ATP5F1C/subunit gamma, ATP5F1D/subunit delta, ATP5F1E/subunit epsilon, ATP5PF/subunit F6, ATP5PB/subunit b, ATP5PD/subunit d, ATP5PO/subunit OSCP. ATP synthase complex consists of a soluble F(1) head domain (subunits alpha(3) and beta(3)) - the catalytic core - and a membrane F(0) domain - the membrane proton channel (subunits c, a, 8, e, f, g, k and j). These two domains are linked by a central stalk (subunits gamma, delta, and epsilon) rotating inside the F1 region and a stationary peripheral stalk (subunits F6, b, d, and OSCP). Interacts with PRICKLE3.</text>
</comment>
<comment type="subcellular location">
    <subcellularLocation>
        <location>Mitochondrion membrane</location>
        <topology>Single-pass membrane protein</topology>
    </subcellularLocation>
</comment>
<comment type="similarity">
    <text evidence="5">Belongs to the ATPase protein 8 family.</text>
</comment>
<evidence type="ECO:0000250" key="1">
    <source>
        <dbReference type="UniProtKB" id="P03928"/>
    </source>
</evidence>
<evidence type="ECO:0000250" key="2">
    <source>
        <dbReference type="UniProtKB" id="P03930"/>
    </source>
</evidence>
<evidence type="ECO:0000250" key="3">
    <source>
        <dbReference type="UniProtKB" id="P19483"/>
    </source>
</evidence>
<evidence type="ECO:0000255" key="4"/>
<evidence type="ECO:0000305" key="5"/>
<evidence type="ECO:0000312" key="6">
    <source>
        <dbReference type="Proteomes" id="UP000005447"/>
    </source>
</evidence>
<name>ATP8_CAVPO</name>